<feature type="chain" id="PRO_0000141075" description="Ribose-phosphate pyrophosphokinase 2">
    <location>
        <begin position="1"/>
        <end position="318"/>
    </location>
</feature>
<feature type="region of interest" description="Binding of phosphoribosylpyrophosphate" evidence="2">
    <location>
        <begin position="212"/>
        <end position="227"/>
    </location>
</feature>
<feature type="binding site" evidence="1">
    <location>
        <begin position="96"/>
        <end position="101"/>
    </location>
    <ligand>
        <name>ATP</name>
        <dbReference type="ChEBI" id="CHEBI:30616"/>
    </ligand>
</feature>
<feature type="binding site" evidence="2">
    <location>
        <position position="128"/>
    </location>
    <ligand>
        <name>Mg(2+)</name>
        <dbReference type="ChEBI" id="CHEBI:18420"/>
    </ligand>
</feature>
<feature type="binding site" evidence="1">
    <location>
        <position position="130"/>
    </location>
    <ligand>
        <name>ATP</name>
        <dbReference type="ChEBI" id="CHEBI:30616"/>
    </ligand>
</feature>
<feature type="binding site" evidence="2">
    <location>
        <position position="130"/>
    </location>
    <ligand>
        <name>Mg(2+)</name>
        <dbReference type="ChEBI" id="CHEBI:18420"/>
    </ligand>
</feature>
<feature type="binding site" evidence="2">
    <location>
        <position position="139"/>
    </location>
    <ligand>
        <name>Mg(2+)</name>
        <dbReference type="ChEBI" id="CHEBI:18420"/>
    </ligand>
</feature>
<feature type="binding site" evidence="2">
    <location>
        <position position="143"/>
    </location>
    <ligand>
        <name>Mg(2+)</name>
        <dbReference type="ChEBI" id="CHEBI:18420"/>
    </ligand>
</feature>
<proteinExistence type="evidence at transcript level"/>
<protein>
    <recommendedName>
        <fullName>Ribose-phosphate pyrophosphokinase 2</fullName>
        <ecNumber>2.7.6.1</ecNumber>
    </recommendedName>
    <alternativeName>
        <fullName>Phosphoribosyl pyrophosphate synthase II</fullName>
        <shortName>PRS-II</shortName>
    </alternativeName>
</protein>
<organism>
    <name type="scientific">Macaca fascicularis</name>
    <name type="common">Crab-eating macaque</name>
    <name type="synonym">Cynomolgus monkey</name>
    <dbReference type="NCBI Taxonomy" id="9541"/>
    <lineage>
        <taxon>Eukaryota</taxon>
        <taxon>Metazoa</taxon>
        <taxon>Chordata</taxon>
        <taxon>Craniata</taxon>
        <taxon>Vertebrata</taxon>
        <taxon>Euteleostomi</taxon>
        <taxon>Mammalia</taxon>
        <taxon>Eutheria</taxon>
        <taxon>Euarchontoglires</taxon>
        <taxon>Primates</taxon>
        <taxon>Haplorrhini</taxon>
        <taxon>Catarrhini</taxon>
        <taxon>Cercopithecidae</taxon>
        <taxon>Cercopithecinae</taxon>
        <taxon>Macaca</taxon>
    </lineage>
</organism>
<sequence>MPNIVLFSGSSHQDLSQRVADRLGLELGKVVTKKFSNQETSVEIGESVRGEDVYIIQSGCGEINDNLMELLIMINACKIASSSRVTAVIPCFPYARQDKKDKSRAPISAKLVANMLSVAGADHIITMDLHASQIQGFFDIPVDNLYAEPAVLQWIRENIAEWKNCIIVSPDAGGAKRVTSIADRLNVEFALIHKERKKANEVDRMVLVGDVKDRVAILVDDMADTCGTICHAADKLLSAGATKVYAILTHGIFSGPAISRINNAAFEAVVVTNTIPQEDKMKHCTKIQVIDISMILAEAIRRTHNGESVSYLFSHVPL</sequence>
<comment type="function">
    <text>Catalyzes the synthesis of phosphoribosylpyrophosphate (PRPP) that is essential for nucleotide synthesis.</text>
</comment>
<comment type="catalytic activity">
    <reaction>
        <text>D-ribose 5-phosphate + ATP = 5-phospho-alpha-D-ribose 1-diphosphate + AMP + H(+)</text>
        <dbReference type="Rhea" id="RHEA:15609"/>
        <dbReference type="ChEBI" id="CHEBI:15378"/>
        <dbReference type="ChEBI" id="CHEBI:30616"/>
        <dbReference type="ChEBI" id="CHEBI:58017"/>
        <dbReference type="ChEBI" id="CHEBI:78346"/>
        <dbReference type="ChEBI" id="CHEBI:456215"/>
        <dbReference type="EC" id="2.7.6.1"/>
    </reaction>
</comment>
<comment type="cofactor">
    <cofactor evidence="1">
        <name>Mg(2+)</name>
        <dbReference type="ChEBI" id="CHEBI:18420"/>
    </cofactor>
</comment>
<comment type="activity regulation">
    <text>Activated by magnesium and inorganic phosphate.</text>
</comment>
<comment type="pathway">
    <text>Metabolic intermediate biosynthesis; 5-phospho-alpha-D-ribose 1-diphosphate biosynthesis; 5-phospho-alpha-D-ribose 1-diphosphate from D-ribose 5-phosphate (route I): step 1/1.</text>
</comment>
<comment type="subunit">
    <text evidence="1">Homodimer. The active form is probably a hexamer composed of 3 homodimers (By similarity).</text>
</comment>
<comment type="similarity">
    <text evidence="3">Belongs to the ribose-phosphate pyrophosphokinase family.</text>
</comment>
<gene>
    <name type="primary">PRPS2</name>
    <name type="ORF">QflA-13604</name>
</gene>
<reference key="1">
    <citation type="submission" date="2005-06" db="EMBL/GenBank/DDBJ databases">
        <title>DNA sequences of macaque genes expressed in brain or testis and its evolutionary implications.</title>
        <authorList>
            <consortium name="International consortium for macaque cDNA sequencing and analysis"/>
        </authorList>
    </citation>
    <scope>NUCLEOTIDE SEQUENCE [LARGE SCALE MRNA]</scope>
    <source>
        <tissue>Frontal cortex</tissue>
    </source>
</reference>
<name>PRPS2_MACFA</name>
<evidence type="ECO:0000250" key="1"/>
<evidence type="ECO:0000255" key="2"/>
<evidence type="ECO:0000305" key="3"/>
<keyword id="KW-0067">ATP-binding</keyword>
<keyword id="KW-0418">Kinase</keyword>
<keyword id="KW-0460">Magnesium</keyword>
<keyword id="KW-0479">Metal-binding</keyword>
<keyword id="KW-0545">Nucleotide biosynthesis</keyword>
<keyword id="KW-0547">Nucleotide-binding</keyword>
<keyword id="KW-1185">Reference proteome</keyword>
<keyword id="KW-0808">Transferase</keyword>
<accession>Q4R4R7</accession>
<dbReference type="EC" id="2.7.6.1"/>
<dbReference type="EMBL" id="AB169827">
    <property type="protein sequence ID" value="BAE01908.1"/>
    <property type="molecule type" value="mRNA"/>
</dbReference>
<dbReference type="RefSeq" id="NP_001306491.1">
    <property type="nucleotide sequence ID" value="NM_001319562.1"/>
</dbReference>
<dbReference type="RefSeq" id="XP_045240457.1">
    <property type="nucleotide sequence ID" value="XM_045384522.2"/>
</dbReference>
<dbReference type="SMR" id="Q4R4R7"/>
<dbReference type="STRING" id="9541.ENSMFAP00000016730"/>
<dbReference type="GeneID" id="101866782"/>
<dbReference type="eggNOG" id="KOG1448">
    <property type="taxonomic scope" value="Eukaryota"/>
</dbReference>
<dbReference type="UniPathway" id="UPA00087">
    <property type="reaction ID" value="UER00172"/>
</dbReference>
<dbReference type="Proteomes" id="UP000233100">
    <property type="component" value="Unplaced"/>
</dbReference>
<dbReference type="GO" id="GO:0005737">
    <property type="term" value="C:cytoplasm"/>
    <property type="evidence" value="ECO:0007669"/>
    <property type="project" value="TreeGrafter"/>
</dbReference>
<dbReference type="GO" id="GO:0002189">
    <property type="term" value="C:ribose phosphate diphosphokinase complex"/>
    <property type="evidence" value="ECO:0007669"/>
    <property type="project" value="TreeGrafter"/>
</dbReference>
<dbReference type="GO" id="GO:0005524">
    <property type="term" value="F:ATP binding"/>
    <property type="evidence" value="ECO:0000250"/>
    <property type="project" value="UniProtKB"/>
</dbReference>
<dbReference type="GO" id="GO:0016301">
    <property type="term" value="F:kinase activity"/>
    <property type="evidence" value="ECO:0007669"/>
    <property type="project" value="UniProtKB-KW"/>
</dbReference>
<dbReference type="GO" id="GO:0000287">
    <property type="term" value="F:magnesium ion binding"/>
    <property type="evidence" value="ECO:0007669"/>
    <property type="project" value="InterPro"/>
</dbReference>
<dbReference type="GO" id="GO:0042803">
    <property type="term" value="F:protein homodimerization activity"/>
    <property type="evidence" value="ECO:0000250"/>
    <property type="project" value="UniProtKB"/>
</dbReference>
<dbReference type="GO" id="GO:0004749">
    <property type="term" value="F:ribose phosphate diphosphokinase activity"/>
    <property type="evidence" value="ECO:0000250"/>
    <property type="project" value="UniProtKB"/>
</dbReference>
<dbReference type="GO" id="GO:0006015">
    <property type="term" value="P:5-phosphoribose 1-diphosphate biosynthetic process"/>
    <property type="evidence" value="ECO:0007669"/>
    <property type="project" value="UniProtKB-UniPathway"/>
</dbReference>
<dbReference type="GO" id="GO:0006164">
    <property type="term" value="P:purine nucleotide biosynthetic process"/>
    <property type="evidence" value="ECO:0007669"/>
    <property type="project" value="TreeGrafter"/>
</dbReference>
<dbReference type="GO" id="GO:0009156">
    <property type="term" value="P:ribonucleoside monophosphate biosynthetic process"/>
    <property type="evidence" value="ECO:0007669"/>
    <property type="project" value="InterPro"/>
</dbReference>
<dbReference type="CDD" id="cd06223">
    <property type="entry name" value="PRTases_typeI"/>
    <property type="match status" value="1"/>
</dbReference>
<dbReference type="FunFam" id="3.40.50.2020:FF:000031">
    <property type="entry name" value="Probable PRS4-ribose-phosphate pyrophosphokinase 3"/>
    <property type="match status" value="1"/>
</dbReference>
<dbReference type="FunFam" id="3.40.50.2020:FF:000005">
    <property type="entry name" value="Ribose-phosphate pyrophosphokinase 1"/>
    <property type="match status" value="1"/>
</dbReference>
<dbReference type="Gene3D" id="3.40.50.2020">
    <property type="match status" value="2"/>
</dbReference>
<dbReference type="HAMAP" id="MF_00583_B">
    <property type="entry name" value="RibP_PPkinase_B"/>
    <property type="match status" value="1"/>
</dbReference>
<dbReference type="InterPro" id="IPR000842">
    <property type="entry name" value="PRib_PP_synth_CS"/>
</dbReference>
<dbReference type="InterPro" id="IPR029099">
    <property type="entry name" value="Pribosyltran_N"/>
</dbReference>
<dbReference type="InterPro" id="IPR000836">
    <property type="entry name" value="PRibTrfase_dom"/>
</dbReference>
<dbReference type="InterPro" id="IPR029057">
    <property type="entry name" value="PRTase-like"/>
</dbReference>
<dbReference type="InterPro" id="IPR005946">
    <property type="entry name" value="Rib-P_diPkinase"/>
</dbReference>
<dbReference type="InterPro" id="IPR037515">
    <property type="entry name" value="Rib-P_diPkinase_bac"/>
</dbReference>
<dbReference type="NCBIfam" id="NF002320">
    <property type="entry name" value="PRK01259.1"/>
    <property type="match status" value="1"/>
</dbReference>
<dbReference type="NCBIfam" id="TIGR01251">
    <property type="entry name" value="ribP_PPkin"/>
    <property type="match status" value="1"/>
</dbReference>
<dbReference type="PANTHER" id="PTHR10210">
    <property type="entry name" value="RIBOSE-PHOSPHATE DIPHOSPHOKINASE FAMILY MEMBER"/>
    <property type="match status" value="1"/>
</dbReference>
<dbReference type="PANTHER" id="PTHR10210:SF32">
    <property type="entry name" value="RIBOSE-PHOSPHATE PYROPHOSPHOKINASE 2"/>
    <property type="match status" value="1"/>
</dbReference>
<dbReference type="Pfam" id="PF14572">
    <property type="entry name" value="Pribosyl_synth"/>
    <property type="match status" value="1"/>
</dbReference>
<dbReference type="Pfam" id="PF13793">
    <property type="entry name" value="Pribosyltran_N"/>
    <property type="match status" value="1"/>
</dbReference>
<dbReference type="SMART" id="SM01400">
    <property type="entry name" value="Pribosyltran_N"/>
    <property type="match status" value="1"/>
</dbReference>
<dbReference type="SUPFAM" id="SSF53271">
    <property type="entry name" value="PRTase-like"/>
    <property type="match status" value="1"/>
</dbReference>
<dbReference type="PROSITE" id="PS00114">
    <property type="entry name" value="PRPP_SYNTHASE"/>
    <property type="match status" value="1"/>
</dbReference>